<comment type="similarity">
    <text evidence="1">Belongs to the UPF0145 family.</text>
</comment>
<name>Y1066_BACVZ</name>
<gene>
    <name type="ordered locus">RBAM_010660</name>
</gene>
<dbReference type="EMBL" id="CP000560">
    <property type="protein sequence ID" value="ABS73430.1"/>
    <property type="molecule type" value="Genomic_DNA"/>
</dbReference>
<dbReference type="RefSeq" id="WP_012117239.1">
    <property type="nucleotide sequence ID" value="NC_009725.2"/>
</dbReference>
<dbReference type="SMR" id="A7Z354"/>
<dbReference type="GeneID" id="93080203"/>
<dbReference type="KEGG" id="bay:RBAM_010660"/>
<dbReference type="HOGENOM" id="CLU_117144_1_2_9"/>
<dbReference type="Proteomes" id="UP000001120">
    <property type="component" value="Chromosome"/>
</dbReference>
<dbReference type="Gene3D" id="3.30.110.70">
    <property type="entry name" value="Hypothetical protein apc22750. Chain B"/>
    <property type="match status" value="1"/>
</dbReference>
<dbReference type="HAMAP" id="MF_00338">
    <property type="entry name" value="UPF0145"/>
    <property type="match status" value="1"/>
</dbReference>
<dbReference type="InterPro" id="IPR035439">
    <property type="entry name" value="UPF0145_dom_sf"/>
</dbReference>
<dbReference type="InterPro" id="IPR002765">
    <property type="entry name" value="UPF0145_YbjQ-like"/>
</dbReference>
<dbReference type="PANTHER" id="PTHR34068:SF2">
    <property type="entry name" value="UPF0145 PROTEIN SCO3412"/>
    <property type="match status" value="1"/>
</dbReference>
<dbReference type="PANTHER" id="PTHR34068">
    <property type="entry name" value="UPF0145 PROTEIN YBJQ"/>
    <property type="match status" value="1"/>
</dbReference>
<dbReference type="Pfam" id="PF01906">
    <property type="entry name" value="YbjQ_1"/>
    <property type="match status" value="1"/>
</dbReference>
<dbReference type="SUPFAM" id="SSF117782">
    <property type="entry name" value="YbjQ-like"/>
    <property type="match status" value="1"/>
</dbReference>
<reference key="1">
    <citation type="journal article" date="2007" name="Nat. Biotechnol.">
        <title>Comparative analysis of the complete genome sequence of the plant growth-promoting bacterium Bacillus amyloliquefaciens FZB42.</title>
        <authorList>
            <person name="Chen X.H."/>
            <person name="Koumoutsi A."/>
            <person name="Scholz R."/>
            <person name="Eisenreich A."/>
            <person name="Schneider K."/>
            <person name="Heinemeyer I."/>
            <person name="Morgenstern B."/>
            <person name="Voss B."/>
            <person name="Hess W.R."/>
            <person name="Reva O."/>
            <person name="Junge H."/>
            <person name="Voigt B."/>
            <person name="Jungblut P.R."/>
            <person name="Vater J."/>
            <person name="Suessmuth R."/>
            <person name="Liesegang H."/>
            <person name="Strittmatter A."/>
            <person name="Gottschalk G."/>
            <person name="Borriss R."/>
        </authorList>
    </citation>
    <scope>NUCLEOTIDE SEQUENCE [LARGE SCALE GENOMIC DNA]</scope>
    <source>
        <strain>DSM 23117 / BGSC 10A6 / LMG 26770 / FZB42</strain>
    </source>
</reference>
<sequence length="111" mass="11905">MIMTTTETIAGKQITEVKGLVTSSIVQSRHIGKDLLAGLKSVVGGELKSYTEMLEDSKKAVKERLIREAEQLGANAIVGLRFELTAGQNTSELIGYGTAVTAESIKKNKPL</sequence>
<feature type="chain" id="PRO_1000079297" description="UPF0145 protein RBAM_010660">
    <location>
        <begin position="1"/>
        <end position="111"/>
    </location>
</feature>
<evidence type="ECO:0000255" key="1">
    <source>
        <dbReference type="HAMAP-Rule" id="MF_00338"/>
    </source>
</evidence>
<proteinExistence type="inferred from homology"/>
<organism>
    <name type="scientific">Bacillus velezensis (strain DSM 23117 / BGSC 10A6 / LMG 26770 / FZB42)</name>
    <name type="common">Bacillus amyloliquefaciens subsp. plantarum</name>
    <dbReference type="NCBI Taxonomy" id="326423"/>
    <lineage>
        <taxon>Bacteria</taxon>
        <taxon>Bacillati</taxon>
        <taxon>Bacillota</taxon>
        <taxon>Bacilli</taxon>
        <taxon>Bacillales</taxon>
        <taxon>Bacillaceae</taxon>
        <taxon>Bacillus</taxon>
        <taxon>Bacillus amyloliquefaciens group</taxon>
    </lineage>
</organism>
<accession>A7Z354</accession>
<protein>
    <recommendedName>
        <fullName evidence="1">UPF0145 protein RBAM_010660</fullName>
    </recommendedName>
</protein>